<evidence type="ECO:0000250" key="1"/>
<evidence type="ECO:0000305" key="2"/>
<feature type="chain" id="PRO_0000195228" description="Glycerol-3-phosphate acyltransferase">
    <location>
        <begin position="1"/>
        <end position="834"/>
    </location>
</feature>
<feature type="short sequence motif" description="HXXXXD motif">
    <location>
        <begin position="310"/>
        <end position="315"/>
    </location>
</feature>
<accession>Q9HXW7</accession>
<keyword id="KW-0012">Acyltransferase</keyword>
<keyword id="KW-0997">Cell inner membrane</keyword>
<keyword id="KW-1003">Cell membrane</keyword>
<keyword id="KW-0444">Lipid biosynthesis</keyword>
<keyword id="KW-0443">Lipid metabolism</keyword>
<keyword id="KW-0472">Membrane</keyword>
<keyword id="KW-0594">Phospholipid biosynthesis</keyword>
<keyword id="KW-1208">Phospholipid metabolism</keyword>
<keyword id="KW-1185">Reference proteome</keyword>
<keyword id="KW-0808">Transferase</keyword>
<sequence>MPRYPFRRFGFGALRRLLYLWVRSETINQSAFTLKIDRSKPVLYVLQQPSVSDLAVVDTECRKAGLPRPVMPVAVGDAIEPAAFFYLTPEPDWLGRQDKRGASPTLVRMLAAVGQNGLDDAQIIPVSVFWGQSPDSESSPWKLLFADNWAVTGRLRKLARILILGRKTRVQFSAPIHLRELVEQGKGHERTLRMVNRILRVHFRNLKTAVIGPDLSHRRNLVKGLLRAPLVRQAISEECESERISQEKAEGIALRYANEIASDFSYPVIRFLEVILSWFWNKLYEGVKVNHIERVQDVAQGNEIVYVPCHRSHIDYLLLSYLLFRNGLTPPHIAAGINLNMPVIGSILRRGGAFFMRRSFKGNQLYTAVFNEYLHTLFSRGFSTEYFVEGGRSRTGRMLHPRTGMLAITLRSFLRDSRRPIVFVPVYIGYERVLEGRTYLGELRGATKKKESIFDLFKVVGALKQRFGQVWVNFGEPIHLDQFLDRHQPDWQDQDLGPEYRPDWLPQTTNLLAKDVARHLNDAAAINPVNLVALALLSTSRQALDESALARILDLYLALLRKVPYSPSATLPDGDGQALIEYVKSMNLLAEQKDALGRILYLDEQNAVLATYYRNNVLHVFALPALIASFFQSNSRISREQLLRFARALYPYLQAELFIRWSLDELDAVIDQWLAALVEQDLLRQENDTFIRPAPSSRQYVLLILLARSVTQTLQRFYMAIALLLNAGQNALTAEELENLCTVMAQRLSILHGLNAPEFFDKSLFRHFIQTLLDLRVLRKDEAGKLSYHELLGELAEGAAKRVLPAEIRLSIRQVALERPAEEAAAESNDAAAN</sequence>
<proteinExistence type="inferred from homology"/>
<dbReference type="EC" id="2.3.1.15"/>
<dbReference type="EMBL" id="AE004091">
    <property type="protein sequence ID" value="AAG07061.1"/>
    <property type="molecule type" value="Genomic_DNA"/>
</dbReference>
<dbReference type="PIR" id="F83185">
    <property type="entry name" value="F83185"/>
</dbReference>
<dbReference type="RefSeq" id="NP_252363.1">
    <property type="nucleotide sequence ID" value="NC_002516.2"/>
</dbReference>
<dbReference type="RefSeq" id="WP_003113856.1">
    <property type="nucleotide sequence ID" value="NZ_QZGE01000001.1"/>
</dbReference>
<dbReference type="SMR" id="Q9HXW7"/>
<dbReference type="FunCoup" id="Q9HXW7">
    <property type="interactions" value="282"/>
</dbReference>
<dbReference type="STRING" id="208964.PA3673"/>
<dbReference type="PaxDb" id="208964-PA3673"/>
<dbReference type="GeneID" id="880591"/>
<dbReference type="KEGG" id="pae:PA3673"/>
<dbReference type="PATRIC" id="fig|208964.12.peg.3842"/>
<dbReference type="PseudoCAP" id="PA3673"/>
<dbReference type="HOGENOM" id="CLU_015407_0_0_6"/>
<dbReference type="InParanoid" id="Q9HXW7"/>
<dbReference type="OrthoDB" id="335193at2"/>
<dbReference type="PhylomeDB" id="Q9HXW7"/>
<dbReference type="BioCyc" id="PAER208964:G1FZ6-3743-MONOMER"/>
<dbReference type="UniPathway" id="UPA00557">
    <property type="reaction ID" value="UER00612"/>
</dbReference>
<dbReference type="Proteomes" id="UP000002438">
    <property type="component" value="Chromosome"/>
</dbReference>
<dbReference type="GO" id="GO:0005886">
    <property type="term" value="C:plasma membrane"/>
    <property type="evidence" value="ECO:0007669"/>
    <property type="project" value="UniProtKB-SubCell"/>
</dbReference>
<dbReference type="GO" id="GO:0004366">
    <property type="term" value="F:glycerol-3-phosphate O-acyltransferase activity"/>
    <property type="evidence" value="ECO:0000318"/>
    <property type="project" value="GO_Central"/>
</dbReference>
<dbReference type="GO" id="GO:0016024">
    <property type="term" value="P:CDP-diacylglycerol biosynthetic process"/>
    <property type="evidence" value="ECO:0007669"/>
    <property type="project" value="UniProtKB-UniRule"/>
</dbReference>
<dbReference type="GO" id="GO:0006631">
    <property type="term" value="P:fatty acid metabolic process"/>
    <property type="evidence" value="ECO:0000318"/>
    <property type="project" value="GO_Central"/>
</dbReference>
<dbReference type="GO" id="GO:0008654">
    <property type="term" value="P:phospholipid biosynthetic process"/>
    <property type="evidence" value="ECO:0000318"/>
    <property type="project" value="GO_Central"/>
</dbReference>
<dbReference type="CDD" id="cd07993">
    <property type="entry name" value="LPLAT_DHAPAT-like"/>
    <property type="match status" value="1"/>
</dbReference>
<dbReference type="HAMAP" id="MF_00393">
    <property type="entry name" value="Glyc3P_acyltrans"/>
    <property type="match status" value="1"/>
</dbReference>
<dbReference type="InterPro" id="IPR022284">
    <property type="entry name" value="GPAT/DHAPAT"/>
</dbReference>
<dbReference type="InterPro" id="IPR045520">
    <property type="entry name" value="GPAT/DHAPAT_C"/>
</dbReference>
<dbReference type="InterPro" id="IPR041728">
    <property type="entry name" value="GPAT/DHAPAT_LPLAT"/>
</dbReference>
<dbReference type="InterPro" id="IPR028354">
    <property type="entry name" value="GPAT_PlsB"/>
</dbReference>
<dbReference type="InterPro" id="IPR002123">
    <property type="entry name" value="Plipid/glycerol_acylTrfase"/>
</dbReference>
<dbReference type="NCBIfam" id="TIGR03703">
    <property type="entry name" value="plsB"/>
    <property type="match status" value="1"/>
</dbReference>
<dbReference type="NCBIfam" id="NF003441">
    <property type="entry name" value="PRK04974.1"/>
    <property type="match status" value="1"/>
</dbReference>
<dbReference type="PANTHER" id="PTHR12563:SF17">
    <property type="entry name" value="DIHYDROXYACETONE PHOSPHATE ACYLTRANSFERASE"/>
    <property type="match status" value="1"/>
</dbReference>
<dbReference type="PANTHER" id="PTHR12563">
    <property type="entry name" value="GLYCEROL-3-PHOSPHATE ACYLTRANSFERASE"/>
    <property type="match status" value="1"/>
</dbReference>
<dbReference type="Pfam" id="PF01553">
    <property type="entry name" value="Acyltransferase"/>
    <property type="match status" value="1"/>
</dbReference>
<dbReference type="Pfam" id="PF19277">
    <property type="entry name" value="GPAT_C"/>
    <property type="match status" value="1"/>
</dbReference>
<dbReference type="PIRSF" id="PIRSF500064">
    <property type="entry name" value="GPAT"/>
    <property type="match status" value="1"/>
</dbReference>
<dbReference type="PIRSF" id="PIRSF000437">
    <property type="entry name" value="GPAT_DHAPAT"/>
    <property type="match status" value="1"/>
</dbReference>
<dbReference type="SMART" id="SM00563">
    <property type="entry name" value="PlsC"/>
    <property type="match status" value="1"/>
</dbReference>
<dbReference type="SUPFAM" id="SSF69593">
    <property type="entry name" value="Glycerol-3-phosphate (1)-acyltransferase"/>
    <property type="match status" value="1"/>
</dbReference>
<comment type="catalytic activity">
    <reaction>
        <text>sn-glycerol 3-phosphate + an acyl-CoA = a 1-acyl-sn-glycero-3-phosphate + CoA</text>
        <dbReference type="Rhea" id="RHEA:15325"/>
        <dbReference type="ChEBI" id="CHEBI:57287"/>
        <dbReference type="ChEBI" id="CHEBI:57597"/>
        <dbReference type="ChEBI" id="CHEBI:57970"/>
        <dbReference type="ChEBI" id="CHEBI:58342"/>
        <dbReference type="EC" id="2.3.1.15"/>
    </reaction>
</comment>
<comment type="pathway">
    <text>Phospholipid metabolism; CDP-diacylglycerol biosynthesis; CDP-diacylglycerol from sn-glycerol 3-phosphate: step 1/3.</text>
</comment>
<comment type="subcellular location">
    <subcellularLocation>
        <location evidence="1">Cell inner membrane</location>
        <topology evidence="1">Peripheral membrane protein</topology>
        <orientation evidence="1">Cytoplasmic side</orientation>
    </subcellularLocation>
</comment>
<comment type="domain">
    <text evidence="1">The HXXXXD motif is essential for acyltransferase activity and may constitute the binding site for the phosphate moiety of the glycerol-3-phosphate.</text>
</comment>
<comment type="similarity">
    <text evidence="2">Belongs to the GPAT/DAPAT family.</text>
</comment>
<gene>
    <name type="primary">plsB</name>
    <name type="ordered locus">PA3673</name>
</gene>
<name>PLSB_PSEAE</name>
<reference key="1">
    <citation type="journal article" date="2000" name="Nature">
        <title>Complete genome sequence of Pseudomonas aeruginosa PAO1, an opportunistic pathogen.</title>
        <authorList>
            <person name="Stover C.K."/>
            <person name="Pham X.-Q.T."/>
            <person name="Erwin A.L."/>
            <person name="Mizoguchi S.D."/>
            <person name="Warrener P."/>
            <person name="Hickey M.J."/>
            <person name="Brinkman F.S.L."/>
            <person name="Hufnagle W.O."/>
            <person name="Kowalik D.J."/>
            <person name="Lagrou M."/>
            <person name="Garber R.L."/>
            <person name="Goltry L."/>
            <person name="Tolentino E."/>
            <person name="Westbrock-Wadman S."/>
            <person name="Yuan Y."/>
            <person name="Brody L.L."/>
            <person name="Coulter S.N."/>
            <person name="Folger K.R."/>
            <person name="Kas A."/>
            <person name="Larbig K."/>
            <person name="Lim R.M."/>
            <person name="Smith K.A."/>
            <person name="Spencer D.H."/>
            <person name="Wong G.K.-S."/>
            <person name="Wu Z."/>
            <person name="Paulsen I.T."/>
            <person name="Reizer J."/>
            <person name="Saier M.H. Jr."/>
            <person name="Hancock R.E.W."/>
            <person name="Lory S."/>
            <person name="Olson M.V."/>
        </authorList>
    </citation>
    <scope>NUCLEOTIDE SEQUENCE [LARGE SCALE GENOMIC DNA]</scope>
    <source>
        <strain>ATCC 15692 / DSM 22644 / CIP 104116 / JCM 14847 / LMG 12228 / 1C / PRS 101 / PAO1</strain>
    </source>
</reference>
<organism>
    <name type="scientific">Pseudomonas aeruginosa (strain ATCC 15692 / DSM 22644 / CIP 104116 / JCM 14847 / LMG 12228 / 1C / PRS 101 / PAO1)</name>
    <dbReference type="NCBI Taxonomy" id="208964"/>
    <lineage>
        <taxon>Bacteria</taxon>
        <taxon>Pseudomonadati</taxon>
        <taxon>Pseudomonadota</taxon>
        <taxon>Gammaproteobacteria</taxon>
        <taxon>Pseudomonadales</taxon>
        <taxon>Pseudomonadaceae</taxon>
        <taxon>Pseudomonas</taxon>
    </lineage>
</organism>
<protein>
    <recommendedName>
        <fullName>Glycerol-3-phosphate acyltransferase</fullName>
        <shortName>GPAT</shortName>
        <ecNumber>2.3.1.15</ecNumber>
    </recommendedName>
</protein>